<accession>P48657</accession>
<evidence type="ECO:0000250" key="1">
    <source>
        <dbReference type="UniProtKB" id="P03923"/>
    </source>
</evidence>
<evidence type="ECO:0000250" key="2">
    <source>
        <dbReference type="UniProtKB" id="P03924"/>
    </source>
</evidence>
<evidence type="ECO:0000255" key="3"/>
<evidence type="ECO:0000305" key="4"/>
<evidence type="ECO:0000312" key="5">
    <source>
        <dbReference type="Proteomes" id="UP000002281"/>
    </source>
</evidence>
<gene>
    <name type="primary">MT-ND6</name>
    <name type="synonym">MTND6</name>
    <name type="synonym">NADH6</name>
    <name type="synonym">ND6</name>
</gene>
<sequence length="175" mass="18670">MMTYIVFILSVIFVVSFVGFSSKPSPIYGGLVLIVSGGVGCGIIMNFGGSFLGLMVFLIYLGGMLVVFGYTTAMATEQYPEVWVSNTTVMGVFLLGLLMEVMLVLYVLKSEEVGVVFKFSGVGAWAIYDTGDSGAFSEEIMGAAALYSYGAWVVIVTGWSLLVGVLVILEVTRGD</sequence>
<feature type="chain" id="PRO_0000118290" description="NADH-ubiquinone oxidoreductase chain 6">
    <location>
        <begin position="1"/>
        <end position="175"/>
    </location>
</feature>
<feature type="transmembrane region" description="Helical" evidence="3">
    <location>
        <begin position="1"/>
        <end position="21"/>
    </location>
</feature>
<feature type="transmembrane region" description="Helical" evidence="3">
    <location>
        <begin position="25"/>
        <end position="45"/>
    </location>
</feature>
<feature type="transmembrane region" description="Helical" evidence="3">
    <location>
        <begin position="47"/>
        <end position="67"/>
    </location>
</feature>
<feature type="transmembrane region" description="Helical" evidence="3">
    <location>
        <begin position="88"/>
        <end position="108"/>
    </location>
</feature>
<feature type="transmembrane region" description="Helical" evidence="3">
    <location>
        <begin position="149"/>
        <end position="169"/>
    </location>
</feature>
<organism>
    <name type="scientific">Equus caballus</name>
    <name type="common">Horse</name>
    <dbReference type="NCBI Taxonomy" id="9796"/>
    <lineage>
        <taxon>Eukaryota</taxon>
        <taxon>Metazoa</taxon>
        <taxon>Chordata</taxon>
        <taxon>Craniata</taxon>
        <taxon>Vertebrata</taxon>
        <taxon>Euteleostomi</taxon>
        <taxon>Mammalia</taxon>
        <taxon>Eutheria</taxon>
        <taxon>Laurasiatheria</taxon>
        <taxon>Perissodactyla</taxon>
        <taxon>Equidae</taxon>
        <taxon>Equus</taxon>
    </lineage>
</organism>
<reference key="1">
    <citation type="journal article" date="1994" name="Gene">
        <title>The complete mitochondrial DNA sequence of the horse, Equus caballus: extensive heteroplasmy of the control region.</title>
        <authorList>
            <person name="Xu X."/>
            <person name="Arnason U."/>
        </authorList>
    </citation>
    <scope>NUCLEOTIDE SEQUENCE [LARGE SCALE GENOMIC DNA]</scope>
    <source>
        <strain evidence="5">Thoroughbred</strain>
    </source>
</reference>
<name>NU6M_HORSE</name>
<proteinExistence type="inferred from homology"/>
<protein>
    <recommendedName>
        <fullName>NADH-ubiquinone oxidoreductase chain 6</fullName>
        <ecNumber evidence="1">7.1.1.2</ecNumber>
    </recommendedName>
    <alternativeName>
        <fullName>NADH dehydrogenase subunit 6</fullName>
    </alternativeName>
</protein>
<keyword id="KW-0249">Electron transport</keyword>
<keyword id="KW-0472">Membrane</keyword>
<keyword id="KW-0496">Mitochondrion</keyword>
<keyword id="KW-0999">Mitochondrion inner membrane</keyword>
<keyword id="KW-0520">NAD</keyword>
<keyword id="KW-1185">Reference proteome</keyword>
<keyword id="KW-0679">Respiratory chain</keyword>
<keyword id="KW-1278">Translocase</keyword>
<keyword id="KW-0812">Transmembrane</keyword>
<keyword id="KW-1133">Transmembrane helix</keyword>
<keyword id="KW-0813">Transport</keyword>
<keyword id="KW-0830">Ubiquinone</keyword>
<dbReference type="EC" id="7.1.1.2" evidence="1"/>
<dbReference type="EMBL" id="X79547">
    <property type="protein sequence ID" value="CAA56090.1"/>
    <property type="molecule type" value="Genomic_DNA"/>
</dbReference>
<dbReference type="PIR" id="T11868">
    <property type="entry name" value="T11868"/>
</dbReference>
<dbReference type="RefSeq" id="NP_007171.1">
    <property type="nucleotide sequence ID" value="NC_001640.1"/>
</dbReference>
<dbReference type="SMR" id="P48657"/>
<dbReference type="FunCoup" id="P48657">
    <property type="interactions" value="162"/>
</dbReference>
<dbReference type="STRING" id="9796.ENSECAP00000023108"/>
<dbReference type="PaxDb" id="9796-ENSECAP00000023108"/>
<dbReference type="Ensembl" id="ENSECAT00000029841.1">
    <property type="protein sequence ID" value="ENSECAP00000023108.1"/>
    <property type="gene ID" value="ENSECAG00000027677.1"/>
</dbReference>
<dbReference type="KEGG" id="ecb:807848"/>
<dbReference type="VGNC" id="VGNC:99803">
    <property type="gene designation" value="MT-ND6"/>
</dbReference>
<dbReference type="GeneTree" id="ENSGT00390000003988"/>
<dbReference type="HOGENOM" id="CLU_129718_0_0_1"/>
<dbReference type="InParanoid" id="P48657"/>
<dbReference type="OMA" id="WVIYDTG"/>
<dbReference type="OrthoDB" id="9837654at2759"/>
<dbReference type="Proteomes" id="UP000002281">
    <property type="component" value="Mitochondrion"/>
</dbReference>
<dbReference type="Bgee" id="ENSECAG00000027677">
    <property type="expression patterns" value="Expressed in retina and 23 other cell types or tissues"/>
</dbReference>
<dbReference type="GO" id="GO:0005743">
    <property type="term" value="C:mitochondrial inner membrane"/>
    <property type="evidence" value="ECO:0000250"/>
    <property type="project" value="UniProtKB"/>
</dbReference>
<dbReference type="GO" id="GO:0005739">
    <property type="term" value="C:mitochondrion"/>
    <property type="evidence" value="ECO:0000318"/>
    <property type="project" value="GO_Central"/>
</dbReference>
<dbReference type="GO" id="GO:0045271">
    <property type="term" value="C:respiratory chain complex I"/>
    <property type="evidence" value="ECO:0007669"/>
    <property type="project" value="Ensembl"/>
</dbReference>
<dbReference type="GO" id="GO:0008137">
    <property type="term" value="F:NADH dehydrogenase (ubiquinone) activity"/>
    <property type="evidence" value="ECO:0000250"/>
    <property type="project" value="UniProtKB"/>
</dbReference>
<dbReference type="GO" id="GO:0006120">
    <property type="term" value="P:mitochondrial electron transport, NADH to ubiquinone"/>
    <property type="evidence" value="ECO:0000250"/>
    <property type="project" value="UniProtKB"/>
</dbReference>
<dbReference type="GO" id="GO:0032981">
    <property type="term" value="P:mitochondrial respiratory chain complex I assembly"/>
    <property type="evidence" value="ECO:0000250"/>
    <property type="project" value="UniProtKB"/>
</dbReference>
<dbReference type="Gene3D" id="1.20.120.1200">
    <property type="entry name" value="NADH-ubiquinone/plastoquinone oxidoreductase chain 6, subunit NuoJ"/>
    <property type="match status" value="1"/>
</dbReference>
<dbReference type="InterPro" id="IPR050269">
    <property type="entry name" value="ComplexI_Subunit6"/>
</dbReference>
<dbReference type="InterPro" id="IPR001457">
    <property type="entry name" value="NADH_UbQ/plastoQ_OxRdtase_su6"/>
</dbReference>
<dbReference type="InterPro" id="IPR042106">
    <property type="entry name" value="Nuo/plastoQ_OxRdtase_6_NuoJ"/>
</dbReference>
<dbReference type="PANTHER" id="PTHR11435">
    <property type="entry name" value="NADH UBIQUINONE OXIDOREDUCTASE SUBUNIT ND6"/>
    <property type="match status" value="1"/>
</dbReference>
<dbReference type="PANTHER" id="PTHR11435:SF1">
    <property type="entry name" value="NADH-UBIQUINONE OXIDOREDUCTASE CHAIN 6"/>
    <property type="match status" value="1"/>
</dbReference>
<dbReference type="Pfam" id="PF00499">
    <property type="entry name" value="Oxidored_q3"/>
    <property type="match status" value="1"/>
</dbReference>
<geneLocation type="mitochondrion"/>
<comment type="function">
    <text evidence="1">Core subunit of the mitochondrial membrane respiratory chain NADH dehydrogenase (Complex I) which catalyzes electron transfer from NADH through the respiratory chain, using ubiquinone as an electron acceptor. Essential for the catalytic activity and assembly of complex I.</text>
</comment>
<comment type="catalytic activity">
    <reaction evidence="1">
        <text>a ubiquinone + NADH + 5 H(+)(in) = a ubiquinol + NAD(+) + 4 H(+)(out)</text>
        <dbReference type="Rhea" id="RHEA:29091"/>
        <dbReference type="Rhea" id="RHEA-COMP:9565"/>
        <dbReference type="Rhea" id="RHEA-COMP:9566"/>
        <dbReference type="ChEBI" id="CHEBI:15378"/>
        <dbReference type="ChEBI" id="CHEBI:16389"/>
        <dbReference type="ChEBI" id="CHEBI:17976"/>
        <dbReference type="ChEBI" id="CHEBI:57540"/>
        <dbReference type="ChEBI" id="CHEBI:57945"/>
        <dbReference type="EC" id="7.1.1.2"/>
    </reaction>
</comment>
<comment type="subunit">
    <text evidence="2">Core subunit of respiratory chain NADH dehydrogenase (Complex I) which is composed of 45 different subunits.</text>
</comment>
<comment type="subcellular location">
    <subcellularLocation>
        <location evidence="2">Mitochondrion inner membrane</location>
        <topology evidence="3">Multi-pass membrane protein</topology>
    </subcellularLocation>
</comment>
<comment type="similarity">
    <text evidence="4">Belongs to the complex I subunit 6 family.</text>
</comment>